<reference key="1">
    <citation type="journal article" date="2004" name="J. Mol. Microbiol. Biotechnol.">
        <title>The complete genome sequence of Bacillus licheniformis DSM13, an organism with great industrial potential.</title>
        <authorList>
            <person name="Veith B."/>
            <person name="Herzberg C."/>
            <person name="Steckel S."/>
            <person name="Feesche J."/>
            <person name="Maurer K.H."/>
            <person name="Ehrenreich P."/>
            <person name="Baeumer S."/>
            <person name="Henne A."/>
            <person name="Liesegang H."/>
            <person name="Merkl R."/>
            <person name="Ehrenreich A."/>
            <person name="Gottschalk G."/>
        </authorList>
    </citation>
    <scope>NUCLEOTIDE SEQUENCE [LARGE SCALE GENOMIC DNA]</scope>
    <source>
        <strain>ATCC 14580 / DSM 13 / JCM 2505 / CCUG 7422 / NBRC 12200 / NCIMB 9375 / NCTC 10341 / NRRL NRS-1264 / Gibson 46</strain>
    </source>
</reference>
<reference key="2">
    <citation type="journal article" date="2004" name="Genome Biol.">
        <title>Complete genome sequence of the industrial bacterium Bacillus licheniformis and comparisons with closely related Bacillus species.</title>
        <authorList>
            <person name="Rey M.W."/>
            <person name="Ramaiya P."/>
            <person name="Nelson B.A."/>
            <person name="Brody-Karpin S.D."/>
            <person name="Zaretsky E.J."/>
            <person name="Tang M."/>
            <person name="Lopez de Leon A."/>
            <person name="Xiang H."/>
            <person name="Gusti V."/>
            <person name="Clausen I.G."/>
            <person name="Olsen P.B."/>
            <person name="Rasmussen M.D."/>
            <person name="Andersen J.T."/>
            <person name="Joergensen P.L."/>
            <person name="Larsen T.S."/>
            <person name="Sorokin A."/>
            <person name="Bolotin A."/>
            <person name="Lapidus A."/>
            <person name="Galleron N."/>
            <person name="Ehrlich S.D."/>
            <person name="Berka R.M."/>
        </authorList>
    </citation>
    <scope>NUCLEOTIDE SEQUENCE [LARGE SCALE GENOMIC DNA]</scope>
    <source>
        <strain>ATCC 14580 / DSM 13 / JCM 2505 / CCUG 7422 / NBRC 12200 / NCIMB 9375 / NCTC 10341 / NRRL NRS-1264 / Gibson 46</strain>
    </source>
</reference>
<gene>
    <name evidence="1" type="primary">rpsD</name>
    <name type="ordered locus">BLi03111</name>
    <name type="ordered locus">BL00374</name>
</gene>
<accession>Q65G42</accession>
<accession>Q62RJ6</accession>
<keyword id="KW-1185">Reference proteome</keyword>
<keyword id="KW-0687">Ribonucleoprotein</keyword>
<keyword id="KW-0689">Ribosomal protein</keyword>
<keyword id="KW-0694">RNA-binding</keyword>
<keyword id="KW-0699">rRNA-binding</keyword>
<proteinExistence type="inferred from homology"/>
<sequence>MARYTGPSWKLSRRLGISLSGTGKELEKRPYAPGPHGPGQRKKLSEYGLQLQEKQKLRHMYGVNERQFRNLFDKAAKMAGKHGENFMILLESRLDNIVYRLGLARTRRQARQLVNHGHVLVDGSRVDIPSYQVKPGQTISLREKSQNLSVVKEAVEVNNFVPEYLTFDAEKLEGSLTRLPERSELPAEINEALIVEFYSR</sequence>
<organism>
    <name type="scientific">Bacillus licheniformis (strain ATCC 14580 / DSM 13 / JCM 2505 / CCUG 7422 / NBRC 12200 / NCIMB 9375 / NCTC 10341 / NRRL NRS-1264 / Gibson 46)</name>
    <dbReference type="NCBI Taxonomy" id="279010"/>
    <lineage>
        <taxon>Bacteria</taxon>
        <taxon>Bacillati</taxon>
        <taxon>Bacillota</taxon>
        <taxon>Bacilli</taxon>
        <taxon>Bacillales</taxon>
        <taxon>Bacillaceae</taxon>
        <taxon>Bacillus</taxon>
    </lineage>
</organism>
<evidence type="ECO:0000255" key="1">
    <source>
        <dbReference type="HAMAP-Rule" id="MF_01306"/>
    </source>
</evidence>
<evidence type="ECO:0000256" key="2">
    <source>
        <dbReference type="SAM" id="MobiDB-lite"/>
    </source>
</evidence>
<evidence type="ECO:0000305" key="3"/>
<name>RS4_BACLD</name>
<protein>
    <recommendedName>
        <fullName evidence="1">Small ribosomal subunit protein uS4</fullName>
    </recommendedName>
    <alternativeName>
        <fullName evidence="3">30S ribosomal protein S4</fullName>
    </alternativeName>
</protein>
<dbReference type="EMBL" id="AE017333">
    <property type="protein sequence ID" value="AAU41972.1"/>
    <property type="molecule type" value="Genomic_DNA"/>
</dbReference>
<dbReference type="EMBL" id="CP000002">
    <property type="protein sequence ID" value="AAU24614.1"/>
    <property type="molecule type" value="Genomic_DNA"/>
</dbReference>
<dbReference type="RefSeq" id="WP_003184416.1">
    <property type="nucleotide sequence ID" value="NC_006322.1"/>
</dbReference>
<dbReference type="SMR" id="Q65G42"/>
<dbReference type="STRING" id="279010.BL00374"/>
<dbReference type="GeneID" id="92860300"/>
<dbReference type="KEGG" id="bld:BLi03111"/>
<dbReference type="KEGG" id="bli:BL00374"/>
<dbReference type="eggNOG" id="COG0522">
    <property type="taxonomic scope" value="Bacteria"/>
</dbReference>
<dbReference type="HOGENOM" id="CLU_092403_0_1_9"/>
<dbReference type="Proteomes" id="UP000000606">
    <property type="component" value="Chromosome"/>
</dbReference>
<dbReference type="GO" id="GO:0015935">
    <property type="term" value="C:small ribosomal subunit"/>
    <property type="evidence" value="ECO:0007669"/>
    <property type="project" value="InterPro"/>
</dbReference>
<dbReference type="GO" id="GO:0019843">
    <property type="term" value="F:rRNA binding"/>
    <property type="evidence" value="ECO:0007669"/>
    <property type="project" value="UniProtKB-UniRule"/>
</dbReference>
<dbReference type="GO" id="GO:0003735">
    <property type="term" value="F:structural constituent of ribosome"/>
    <property type="evidence" value="ECO:0007669"/>
    <property type="project" value="InterPro"/>
</dbReference>
<dbReference type="GO" id="GO:0042274">
    <property type="term" value="P:ribosomal small subunit biogenesis"/>
    <property type="evidence" value="ECO:0007669"/>
    <property type="project" value="TreeGrafter"/>
</dbReference>
<dbReference type="GO" id="GO:0006412">
    <property type="term" value="P:translation"/>
    <property type="evidence" value="ECO:0007669"/>
    <property type="project" value="UniProtKB-UniRule"/>
</dbReference>
<dbReference type="CDD" id="cd00165">
    <property type="entry name" value="S4"/>
    <property type="match status" value="1"/>
</dbReference>
<dbReference type="FunFam" id="1.10.1050.10:FF:000001">
    <property type="entry name" value="30S ribosomal protein S4"/>
    <property type="match status" value="1"/>
</dbReference>
<dbReference type="FunFam" id="3.10.290.10:FF:000001">
    <property type="entry name" value="30S ribosomal protein S4"/>
    <property type="match status" value="1"/>
</dbReference>
<dbReference type="Gene3D" id="1.10.1050.10">
    <property type="entry name" value="Ribosomal Protein S4 Delta 41, Chain A, domain 1"/>
    <property type="match status" value="1"/>
</dbReference>
<dbReference type="Gene3D" id="3.10.290.10">
    <property type="entry name" value="RNA-binding S4 domain"/>
    <property type="match status" value="1"/>
</dbReference>
<dbReference type="HAMAP" id="MF_01306_B">
    <property type="entry name" value="Ribosomal_uS4_B"/>
    <property type="match status" value="1"/>
</dbReference>
<dbReference type="InterPro" id="IPR022801">
    <property type="entry name" value="Ribosomal_uS4"/>
</dbReference>
<dbReference type="InterPro" id="IPR005709">
    <property type="entry name" value="Ribosomal_uS4_bac-type"/>
</dbReference>
<dbReference type="InterPro" id="IPR018079">
    <property type="entry name" value="Ribosomal_uS4_CS"/>
</dbReference>
<dbReference type="InterPro" id="IPR001912">
    <property type="entry name" value="Ribosomal_uS4_N"/>
</dbReference>
<dbReference type="InterPro" id="IPR002942">
    <property type="entry name" value="S4_RNA-bd"/>
</dbReference>
<dbReference type="InterPro" id="IPR036986">
    <property type="entry name" value="S4_RNA-bd_sf"/>
</dbReference>
<dbReference type="NCBIfam" id="NF003717">
    <property type="entry name" value="PRK05327.1"/>
    <property type="match status" value="1"/>
</dbReference>
<dbReference type="NCBIfam" id="TIGR01017">
    <property type="entry name" value="rpsD_bact"/>
    <property type="match status" value="1"/>
</dbReference>
<dbReference type="PANTHER" id="PTHR11831">
    <property type="entry name" value="30S 40S RIBOSOMAL PROTEIN"/>
    <property type="match status" value="1"/>
</dbReference>
<dbReference type="PANTHER" id="PTHR11831:SF4">
    <property type="entry name" value="SMALL RIBOSOMAL SUBUNIT PROTEIN US4M"/>
    <property type="match status" value="1"/>
</dbReference>
<dbReference type="Pfam" id="PF00163">
    <property type="entry name" value="Ribosomal_S4"/>
    <property type="match status" value="1"/>
</dbReference>
<dbReference type="Pfam" id="PF01479">
    <property type="entry name" value="S4"/>
    <property type="match status" value="1"/>
</dbReference>
<dbReference type="SMART" id="SM01390">
    <property type="entry name" value="Ribosomal_S4"/>
    <property type="match status" value="1"/>
</dbReference>
<dbReference type="SMART" id="SM00363">
    <property type="entry name" value="S4"/>
    <property type="match status" value="1"/>
</dbReference>
<dbReference type="SUPFAM" id="SSF55174">
    <property type="entry name" value="Alpha-L RNA-binding motif"/>
    <property type="match status" value="1"/>
</dbReference>
<dbReference type="PROSITE" id="PS00632">
    <property type="entry name" value="RIBOSOMAL_S4"/>
    <property type="match status" value="1"/>
</dbReference>
<dbReference type="PROSITE" id="PS50889">
    <property type="entry name" value="S4"/>
    <property type="match status" value="1"/>
</dbReference>
<comment type="function">
    <text evidence="1">One of the primary rRNA binding proteins, it binds directly to 16S rRNA where it nucleates assembly of the body of the 30S subunit.</text>
</comment>
<comment type="function">
    <text evidence="1">With S5 and S12 plays an important role in translational accuracy.</text>
</comment>
<comment type="subunit">
    <text evidence="1">Part of the 30S ribosomal subunit. Contacts protein S5. The interaction surface between S4 and S5 is involved in control of translational fidelity.</text>
</comment>
<comment type="similarity">
    <text evidence="1">Belongs to the universal ribosomal protein uS4 family.</text>
</comment>
<feature type="chain" id="PRO_0000228876" description="Small ribosomal subunit protein uS4">
    <location>
        <begin position="1"/>
        <end position="200"/>
    </location>
</feature>
<feature type="domain" description="S4 RNA-binding" evidence="1">
    <location>
        <begin position="92"/>
        <end position="152"/>
    </location>
</feature>
<feature type="region of interest" description="Disordered" evidence="2">
    <location>
        <begin position="22"/>
        <end position="42"/>
    </location>
</feature>